<name>RT25_PICGU</name>
<gene>
    <name type="primary">RSM25</name>
    <name type="ORF">PGUG_03712</name>
</gene>
<comment type="subunit">
    <text evidence="1">Component of the mitochondrial small ribosomal subunit.</text>
</comment>
<comment type="subcellular location">
    <subcellularLocation>
        <location evidence="1">Mitochondrion</location>
    </subcellularLocation>
</comment>
<comment type="similarity">
    <text evidence="3">Belongs to the mitochondrion-specific ribosomal protein mS23 family.</text>
</comment>
<reference key="1">
    <citation type="journal article" date="2009" name="Nature">
        <title>Evolution of pathogenicity and sexual reproduction in eight Candida genomes.</title>
        <authorList>
            <person name="Butler G."/>
            <person name="Rasmussen M.D."/>
            <person name="Lin M.F."/>
            <person name="Santos M.A.S."/>
            <person name="Sakthikumar S."/>
            <person name="Munro C.A."/>
            <person name="Rheinbay E."/>
            <person name="Grabherr M."/>
            <person name="Forche A."/>
            <person name="Reedy J.L."/>
            <person name="Agrafioti I."/>
            <person name="Arnaud M.B."/>
            <person name="Bates S."/>
            <person name="Brown A.J.P."/>
            <person name="Brunke S."/>
            <person name="Costanzo M.C."/>
            <person name="Fitzpatrick D.A."/>
            <person name="de Groot P.W.J."/>
            <person name="Harris D."/>
            <person name="Hoyer L.L."/>
            <person name="Hube B."/>
            <person name="Klis F.M."/>
            <person name="Kodira C."/>
            <person name="Lennard N."/>
            <person name="Logue M.E."/>
            <person name="Martin R."/>
            <person name="Neiman A.M."/>
            <person name="Nikolaou E."/>
            <person name="Quail M.A."/>
            <person name="Quinn J."/>
            <person name="Santos M.C."/>
            <person name="Schmitzberger F.F."/>
            <person name="Sherlock G."/>
            <person name="Shah P."/>
            <person name="Silverstein K.A.T."/>
            <person name="Skrzypek M.S."/>
            <person name="Soll D."/>
            <person name="Staggs R."/>
            <person name="Stansfield I."/>
            <person name="Stumpf M.P.H."/>
            <person name="Sudbery P.E."/>
            <person name="Srikantha T."/>
            <person name="Zeng Q."/>
            <person name="Berman J."/>
            <person name="Berriman M."/>
            <person name="Heitman J."/>
            <person name="Gow N.A.R."/>
            <person name="Lorenz M.C."/>
            <person name="Birren B.W."/>
            <person name="Kellis M."/>
            <person name="Cuomo C.A."/>
        </authorList>
    </citation>
    <scope>NUCLEOTIDE SEQUENCE [LARGE SCALE GENOMIC DNA]</scope>
    <source>
        <strain>ATCC 6260 / CBS 566 / DSM 6381 / JCM 1539 / NBRC 10279 / NRRL Y-324</strain>
    </source>
</reference>
<dbReference type="EMBL" id="CH408158">
    <property type="protein sequence ID" value="EDK39614.2"/>
    <property type="molecule type" value="Genomic_DNA"/>
</dbReference>
<dbReference type="RefSeq" id="XP_001484331.1">
    <property type="nucleotide sequence ID" value="XM_001484281.1"/>
</dbReference>
<dbReference type="SMR" id="A5DKB1"/>
<dbReference type="FunCoup" id="A5DKB1">
    <property type="interactions" value="159"/>
</dbReference>
<dbReference type="STRING" id="294746.A5DKB1"/>
<dbReference type="GeneID" id="5126293"/>
<dbReference type="KEGG" id="pgu:PGUG_03712"/>
<dbReference type="VEuPathDB" id="FungiDB:PGUG_03712"/>
<dbReference type="eggNOG" id="ENOG502RZQQ">
    <property type="taxonomic scope" value="Eukaryota"/>
</dbReference>
<dbReference type="HOGENOM" id="CLU_081350_0_0_1"/>
<dbReference type="InParanoid" id="A5DKB1"/>
<dbReference type="OMA" id="ENWKIWA"/>
<dbReference type="OrthoDB" id="5542239at2759"/>
<dbReference type="Proteomes" id="UP000001997">
    <property type="component" value="Unassembled WGS sequence"/>
</dbReference>
<dbReference type="GO" id="GO:0005763">
    <property type="term" value="C:mitochondrial small ribosomal subunit"/>
    <property type="evidence" value="ECO:0007669"/>
    <property type="project" value="EnsemblFungi"/>
</dbReference>
<dbReference type="GO" id="GO:0003735">
    <property type="term" value="F:structural constituent of ribosome"/>
    <property type="evidence" value="ECO:0007669"/>
    <property type="project" value="EnsemblFungi"/>
</dbReference>
<dbReference type="CDD" id="cd23701">
    <property type="entry name" value="At1g26750"/>
    <property type="match status" value="1"/>
</dbReference>
<dbReference type="InterPro" id="IPR016939">
    <property type="entry name" value="Ribosomal_mS23_fun"/>
</dbReference>
<dbReference type="PANTHER" id="PTHR37799">
    <property type="entry name" value="37S RIBOSOMAL PROTEIN S25, MITOCHONDRIAL"/>
    <property type="match status" value="1"/>
</dbReference>
<dbReference type="PANTHER" id="PTHR37799:SF1">
    <property type="entry name" value="SMALL RIBOSOMAL SUBUNIT PROTEIN MS23"/>
    <property type="match status" value="1"/>
</dbReference>
<dbReference type="Pfam" id="PF13741">
    <property type="entry name" value="MRP-S25"/>
    <property type="match status" value="1"/>
</dbReference>
<dbReference type="PIRSF" id="PIRSF029764">
    <property type="entry name" value="RSM25"/>
    <property type="match status" value="1"/>
</dbReference>
<organism>
    <name type="scientific">Meyerozyma guilliermondii (strain ATCC 6260 / CBS 566 / DSM 6381 / JCM 1539 / NBRC 10279 / NRRL Y-324)</name>
    <name type="common">Yeast</name>
    <name type="synonym">Candida guilliermondii</name>
    <dbReference type="NCBI Taxonomy" id="294746"/>
    <lineage>
        <taxon>Eukaryota</taxon>
        <taxon>Fungi</taxon>
        <taxon>Dikarya</taxon>
        <taxon>Ascomycota</taxon>
        <taxon>Saccharomycotina</taxon>
        <taxon>Pichiomycetes</taxon>
        <taxon>Debaryomycetaceae</taxon>
        <taxon>Meyerozyma</taxon>
    </lineage>
</organism>
<evidence type="ECO:0000250" key="1"/>
<evidence type="ECO:0000256" key="2">
    <source>
        <dbReference type="SAM" id="MobiDB-lite"/>
    </source>
</evidence>
<evidence type="ECO:0000305" key="3"/>
<protein>
    <recommendedName>
        <fullName evidence="3">Small ribosomal subunit protein mS23</fullName>
    </recommendedName>
    <alternativeName>
        <fullName>37S ribosomal protein S25, mitochondrial</fullName>
    </alternativeName>
</protein>
<proteinExistence type="inferred from homology"/>
<feature type="chain" id="PRO_0000343558" description="Small ribosomal subunit protein mS23">
    <location>
        <begin position="1"/>
        <end position="267"/>
    </location>
</feature>
<feature type="region of interest" description="Disordered" evidence="2">
    <location>
        <begin position="230"/>
        <end position="267"/>
    </location>
</feature>
<accession>A5DKB1</accession>
<sequence length="267" mass="30374">MKVQTGATGVLERTSHYLKAGLLRTKPAWFDVVGAHPPSTNLTKKPKLFETGGQKSDPSESIFTKINGEYKTRTSVEDRKQKNNSVSRVPKLQFLEDQLRDVFYHQHPWEFSRPKVLVETSGDDNSKCDWSHMLQFNKPLDGESVVQRTLWLLNRSKMDGKSITLFDAYDEARFEFYRLRMEEEMSSAVSREESTMYGAVFPSPHLEHGVNQEQEYIDIWTKVAGDATKVKTASKDGKSSNGSMGAEDVVEKTTSAWETEFVEEESS</sequence>
<keyword id="KW-0496">Mitochondrion</keyword>
<keyword id="KW-1185">Reference proteome</keyword>
<keyword id="KW-0687">Ribonucleoprotein</keyword>
<keyword id="KW-0689">Ribosomal protein</keyword>